<evidence type="ECO:0000255" key="1">
    <source>
        <dbReference type="HAMAP-Rule" id="MF_00098"/>
    </source>
</evidence>
<organism>
    <name type="scientific">Pseudomonas putida (strain W619)</name>
    <dbReference type="NCBI Taxonomy" id="390235"/>
    <lineage>
        <taxon>Bacteria</taxon>
        <taxon>Pseudomonadati</taxon>
        <taxon>Pseudomonadota</taxon>
        <taxon>Gammaproteobacteria</taxon>
        <taxon>Pseudomonadales</taxon>
        <taxon>Pseudomonadaceae</taxon>
        <taxon>Pseudomonas</taxon>
    </lineage>
</organism>
<proteinExistence type="inferred from homology"/>
<protein>
    <recommendedName>
        <fullName evidence="1">Methionine--tRNA ligase</fullName>
        <ecNumber evidence="1">6.1.1.10</ecNumber>
    </recommendedName>
    <alternativeName>
        <fullName evidence="1">Methionyl-tRNA synthetase</fullName>
        <shortName evidence="1">MetRS</shortName>
    </alternativeName>
</protein>
<accession>B1J1D1</accession>
<reference key="1">
    <citation type="submission" date="2008-02" db="EMBL/GenBank/DDBJ databases">
        <title>Complete sequence of Pseudomonas putida W619.</title>
        <authorList>
            <person name="Copeland A."/>
            <person name="Lucas S."/>
            <person name="Lapidus A."/>
            <person name="Barry K."/>
            <person name="Detter J.C."/>
            <person name="Glavina del Rio T."/>
            <person name="Dalin E."/>
            <person name="Tice H."/>
            <person name="Pitluck S."/>
            <person name="Chain P."/>
            <person name="Malfatti S."/>
            <person name="Shin M."/>
            <person name="Vergez L."/>
            <person name="Schmutz J."/>
            <person name="Larimer F."/>
            <person name="Land M."/>
            <person name="Hauser L."/>
            <person name="Kyrpides N."/>
            <person name="Kim E."/>
            <person name="Taghavi S."/>
            <person name="Vangronsveld D."/>
            <person name="van der Lelie D."/>
            <person name="Richardson P."/>
        </authorList>
    </citation>
    <scope>NUCLEOTIDE SEQUENCE [LARGE SCALE GENOMIC DNA]</scope>
    <source>
        <strain>W619</strain>
    </source>
</reference>
<dbReference type="EC" id="6.1.1.10" evidence="1"/>
<dbReference type="EMBL" id="CP000949">
    <property type="protein sequence ID" value="ACA71631.1"/>
    <property type="molecule type" value="Genomic_DNA"/>
</dbReference>
<dbReference type="SMR" id="B1J1D1"/>
<dbReference type="STRING" id="390235.PputW619_1126"/>
<dbReference type="KEGG" id="ppw:PputW619_1126"/>
<dbReference type="eggNOG" id="COG0073">
    <property type="taxonomic scope" value="Bacteria"/>
</dbReference>
<dbReference type="eggNOG" id="COG0143">
    <property type="taxonomic scope" value="Bacteria"/>
</dbReference>
<dbReference type="HOGENOM" id="CLU_009710_7_0_6"/>
<dbReference type="OrthoDB" id="9810191at2"/>
<dbReference type="GO" id="GO:0005829">
    <property type="term" value="C:cytosol"/>
    <property type="evidence" value="ECO:0007669"/>
    <property type="project" value="TreeGrafter"/>
</dbReference>
<dbReference type="GO" id="GO:0005524">
    <property type="term" value="F:ATP binding"/>
    <property type="evidence" value="ECO:0007669"/>
    <property type="project" value="UniProtKB-UniRule"/>
</dbReference>
<dbReference type="GO" id="GO:0046872">
    <property type="term" value="F:metal ion binding"/>
    <property type="evidence" value="ECO:0007669"/>
    <property type="project" value="UniProtKB-KW"/>
</dbReference>
<dbReference type="GO" id="GO:0004825">
    <property type="term" value="F:methionine-tRNA ligase activity"/>
    <property type="evidence" value="ECO:0007669"/>
    <property type="project" value="UniProtKB-UniRule"/>
</dbReference>
<dbReference type="GO" id="GO:0000049">
    <property type="term" value="F:tRNA binding"/>
    <property type="evidence" value="ECO:0007669"/>
    <property type="project" value="UniProtKB-KW"/>
</dbReference>
<dbReference type="GO" id="GO:0006431">
    <property type="term" value="P:methionyl-tRNA aminoacylation"/>
    <property type="evidence" value="ECO:0007669"/>
    <property type="project" value="UniProtKB-UniRule"/>
</dbReference>
<dbReference type="CDD" id="cd07957">
    <property type="entry name" value="Anticodon_Ia_Met"/>
    <property type="match status" value="1"/>
</dbReference>
<dbReference type="CDD" id="cd00814">
    <property type="entry name" value="MetRS_core"/>
    <property type="match status" value="1"/>
</dbReference>
<dbReference type="CDD" id="cd02800">
    <property type="entry name" value="tRNA_bind_EcMetRS_like"/>
    <property type="match status" value="1"/>
</dbReference>
<dbReference type="FunFam" id="1.10.730.10:FF:000005">
    <property type="entry name" value="Methionine--tRNA ligase"/>
    <property type="match status" value="1"/>
</dbReference>
<dbReference type="FunFam" id="2.20.28.20:FF:000001">
    <property type="entry name" value="Methionine--tRNA ligase"/>
    <property type="match status" value="1"/>
</dbReference>
<dbReference type="FunFam" id="2.40.50.140:FF:000042">
    <property type="entry name" value="Methionine--tRNA ligase"/>
    <property type="match status" value="1"/>
</dbReference>
<dbReference type="Gene3D" id="3.40.50.620">
    <property type="entry name" value="HUPs"/>
    <property type="match status" value="1"/>
</dbReference>
<dbReference type="Gene3D" id="1.10.730.10">
    <property type="entry name" value="Isoleucyl-tRNA Synthetase, Domain 1"/>
    <property type="match status" value="1"/>
</dbReference>
<dbReference type="Gene3D" id="2.20.28.20">
    <property type="entry name" value="Methionyl-tRNA synthetase, Zn-domain"/>
    <property type="match status" value="1"/>
</dbReference>
<dbReference type="Gene3D" id="2.40.50.140">
    <property type="entry name" value="Nucleic acid-binding proteins"/>
    <property type="match status" value="1"/>
</dbReference>
<dbReference type="HAMAP" id="MF_00098">
    <property type="entry name" value="Met_tRNA_synth_type1"/>
    <property type="match status" value="1"/>
</dbReference>
<dbReference type="InterPro" id="IPR001412">
    <property type="entry name" value="aa-tRNA-synth_I_CS"/>
</dbReference>
<dbReference type="InterPro" id="IPR041872">
    <property type="entry name" value="Anticodon_Met"/>
</dbReference>
<dbReference type="InterPro" id="IPR004495">
    <property type="entry name" value="Met-tRNA-synth_bsu_C"/>
</dbReference>
<dbReference type="InterPro" id="IPR023458">
    <property type="entry name" value="Met-tRNA_ligase_1"/>
</dbReference>
<dbReference type="InterPro" id="IPR014758">
    <property type="entry name" value="Met-tRNA_synth"/>
</dbReference>
<dbReference type="InterPro" id="IPR015413">
    <property type="entry name" value="Methionyl/Leucyl_tRNA_Synth"/>
</dbReference>
<dbReference type="InterPro" id="IPR033911">
    <property type="entry name" value="MetRS_core"/>
</dbReference>
<dbReference type="InterPro" id="IPR029038">
    <property type="entry name" value="MetRS_Zn"/>
</dbReference>
<dbReference type="InterPro" id="IPR012340">
    <property type="entry name" value="NA-bd_OB-fold"/>
</dbReference>
<dbReference type="InterPro" id="IPR014729">
    <property type="entry name" value="Rossmann-like_a/b/a_fold"/>
</dbReference>
<dbReference type="InterPro" id="IPR002547">
    <property type="entry name" value="tRNA-bd_dom"/>
</dbReference>
<dbReference type="InterPro" id="IPR009080">
    <property type="entry name" value="tRNAsynth_Ia_anticodon-bd"/>
</dbReference>
<dbReference type="NCBIfam" id="TIGR00398">
    <property type="entry name" value="metG"/>
    <property type="match status" value="1"/>
</dbReference>
<dbReference type="NCBIfam" id="TIGR00399">
    <property type="entry name" value="metG_C_term"/>
    <property type="match status" value="1"/>
</dbReference>
<dbReference type="NCBIfam" id="NF001100">
    <property type="entry name" value="PRK00133.1"/>
    <property type="match status" value="1"/>
</dbReference>
<dbReference type="PANTHER" id="PTHR45765">
    <property type="entry name" value="METHIONINE--TRNA LIGASE"/>
    <property type="match status" value="1"/>
</dbReference>
<dbReference type="PANTHER" id="PTHR45765:SF1">
    <property type="entry name" value="METHIONINE--TRNA LIGASE, CYTOPLASMIC"/>
    <property type="match status" value="1"/>
</dbReference>
<dbReference type="Pfam" id="PF19303">
    <property type="entry name" value="Anticodon_3"/>
    <property type="match status" value="1"/>
</dbReference>
<dbReference type="Pfam" id="PF09334">
    <property type="entry name" value="tRNA-synt_1g"/>
    <property type="match status" value="1"/>
</dbReference>
<dbReference type="Pfam" id="PF01588">
    <property type="entry name" value="tRNA_bind"/>
    <property type="match status" value="1"/>
</dbReference>
<dbReference type="PRINTS" id="PR01041">
    <property type="entry name" value="TRNASYNTHMET"/>
</dbReference>
<dbReference type="SUPFAM" id="SSF47323">
    <property type="entry name" value="Anticodon-binding domain of a subclass of class I aminoacyl-tRNA synthetases"/>
    <property type="match status" value="1"/>
</dbReference>
<dbReference type="SUPFAM" id="SSF57770">
    <property type="entry name" value="Methionyl-tRNA synthetase (MetRS), Zn-domain"/>
    <property type="match status" value="1"/>
</dbReference>
<dbReference type="SUPFAM" id="SSF50249">
    <property type="entry name" value="Nucleic acid-binding proteins"/>
    <property type="match status" value="1"/>
</dbReference>
<dbReference type="SUPFAM" id="SSF52374">
    <property type="entry name" value="Nucleotidylyl transferase"/>
    <property type="match status" value="1"/>
</dbReference>
<dbReference type="PROSITE" id="PS00178">
    <property type="entry name" value="AA_TRNA_LIGASE_I"/>
    <property type="match status" value="1"/>
</dbReference>
<dbReference type="PROSITE" id="PS50886">
    <property type="entry name" value="TRBD"/>
    <property type="match status" value="1"/>
</dbReference>
<comment type="function">
    <text evidence="1">Is required not only for elongation of protein synthesis but also for the initiation of all mRNA translation through initiator tRNA(fMet) aminoacylation.</text>
</comment>
<comment type="catalytic activity">
    <reaction evidence="1">
        <text>tRNA(Met) + L-methionine + ATP = L-methionyl-tRNA(Met) + AMP + diphosphate</text>
        <dbReference type="Rhea" id="RHEA:13481"/>
        <dbReference type="Rhea" id="RHEA-COMP:9667"/>
        <dbReference type="Rhea" id="RHEA-COMP:9698"/>
        <dbReference type="ChEBI" id="CHEBI:30616"/>
        <dbReference type="ChEBI" id="CHEBI:33019"/>
        <dbReference type="ChEBI" id="CHEBI:57844"/>
        <dbReference type="ChEBI" id="CHEBI:78442"/>
        <dbReference type="ChEBI" id="CHEBI:78530"/>
        <dbReference type="ChEBI" id="CHEBI:456215"/>
        <dbReference type="EC" id="6.1.1.10"/>
    </reaction>
</comment>
<comment type="cofactor">
    <cofactor evidence="1">
        <name>Zn(2+)</name>
        <dbReference type="ChEBI" id="CHEBI:29105"/>
    </cofactor>
    <text evidence="1">Binds 1 zinc ion per subunit.</text>
</comment>
<comment type="subunit">
    <text evidence="1">Homodimer.</text>
</comment>
<comment type="subcellular location">
    <subcellularLocation>
        <location evidence="1">Cytoplasm</location>
    </subcellularLocation>
</comment>
<comment type="similarity">
    <text evidence="1">Belongs to the class-I aminoacyl-tRNA synthetase family. MetG type 1 subfamily.</text>
</comment>
<feature type="chain" id="PRO_1000093724" description="Methionine--tRNA ligase">
    <location>
        <begin position="1"/>
        <end position="681"/>
    </location>
</feature>
<feature type="domain" description="tRNA-binding" evidence="1">
    <location>
        <begin position="579"/>
        <end position="681"/>
    </location>
</feature>
<feature type="short sequence motif" description="'HIGH' region">
    <location>
        <begin position="14"/>
        <end position="24"/>
    </location>
</feature>
<feature type="short sequence motif" description="'KMSKS' region">
    <location>
        <begin position="331"/>
        <end position="335"/>
    </location>
</feature>
<feature type="binding site" evidence="1">
    <location>
        <position position="145"/>
    </location>
    <ligand>
        <name>Zn(2+)</name>
        <dbReference type="ChEBI" id="CHEBI:29105"/>
    </ligand>
</feature>
<feature type="binding site" evidence="1">
    <location>
        <position position="148"/>
    </location>
    <ligand>
        <name>Zn(2+)</name>
        <dbReference type="ChEBI" id="CHEBI:29105"/>
    </ligand>
</feature>
<feature type="binding site" evidence="1">
    <location>
        <position position="158"/>
    </location>
    <ligand>
        <name>Zn(2+)</name>
        <dbReference type="ChEBI" id="CHEBI:29105"/>
    </ligand>
</feature>
<feature type="binding site" evidence="1">
    <location>
        <position position="161"/>
    </location>
    <ligand>
        <name>Zn(2+)</name>
        <dbReference type="ChEBI" id="CHEBI:29105"/>
    </ligand>
</feature>
<feature type="binding site" evidence="1">
    <location>
        <position position="334"/>
    </location>
    <ligand>
        <name>ATP</name>
        <dbReference type="ChEBI" id="CHEBI:30616"/>
    </ligand>
</feature>
<sequence length="681" mass="75455">MSEPRQILVTSALPYANGSIHLGHMLEYIQTDMWVRFQKLRGNQCIYVCADDAHGSAIMLRAEKEGITPEQLIANVQAEHSSDFADFLVDFDNFHSTHSEENRELSSLIYSRLRDAGHIATRSVTQYFDPEKGMFLADRFIKGTCPKCAAEDQYGDNCEKCGATYAPTELKNPKSAISGATPVLRDSQHFFFKLPDFQAMLQQWTRSGTLQDAVANKLAEWLDSGLQEWDISRDAPYFGFEIPGEPGKYFYVWLDAPIGYMASFKNLCARRPELDFDAFWNKDSKAELYHFIGKDIVNFHALFWPAMLEGAGLRKPTAVNVHGYLTVNGAKMSKSRGTFIKARTYLDHLQPEYLRYYYAAKLGRGVDDLDLNLEDFVQKVNSDLVGKVVNIASRCAGFIHKGNDGVMVAGDAAPELTEAFLAAAPGIAEAYEARDFGRAMREIMALADRANAWIADKAPWSLAKQEGKQDEVQAICAQGINLFRQLMIFLKPVLPVLAADAEAFLNVAPLTWSDHLSRLENHKLNPFKPLMSRIEPARVEAMIAASKEDLLAAEGQAQAPVGNGELAKDPLSAEIEFDTFAAVDLRVALIVKAEAVPGADKLLQLTLDIGDEQRNVFSGIKSAYPDPSRLEGRLTMMVANLKPRKMRFGVSEGMVMAAGPGGEEIYLLSPDSGAKPGQRIK</sequence>
<gene>
    <name evidence="1" type="primary">metG</name>
    <name type="ordered locus">PputW619_1126</name>
</gene>
<name>SYM_PSEPW</name>
<keyword id="KW-0030">Aminoacyl-tRNA synthetase</keyword>
<keyword id="KW-0067">ATP-binding</keyword>
<keyword id="KW-0963">Cytoplasm</keyword>
<keyword id="KW-0436">Ligase</keyword>
<keyword id="KW-0479">Metal-binding</keyword>
<keyword id="KW-0547">Nucleotide-binding</keyword>
<keyword id="KW-0648">Protein biosynthesis</keyword>
<keyword id="KW-0694">RNA-binding</keyword>
<keyword id="KW-0820">tRNA-binding</keyword>
<keyword id="KW-0862">Zinc</keyword>